<evidence type="ECO:0000250" key="1"/>
<evidence type="ECO:0000256" key="2">
    <source>
        <dbReference type="SAM" id="MobiDB-lite"/>
    </source>
</evidence>
<evidence type="ECO:0000305" key="3"/>
<proteinExistence type="inferred from homology"/>
<sequence length="470" mass="54483">MLRAGKKTNSQTSTSNDACSLLYINVPDFNCNMSQIENYCIDRFNLLNEVSKLKDTLSAQKSNTSKDNEDFRNLSSRFLGSTKDEQFKIKDELSHYCLRLAMCDSTDRNWFITTESILLANRLNQSDLTTIISSFKGFGWSPVSQEEYEQYQDDLGYLVKKANLNLNEVNNTHFYKLPFQDIPKLIDTKKAIIIKGEAYIYISNFKDMVIHTFKNYMNFALDRIKADKTRIKEEFPELIQFFTTLPKAGDGTNKPQLGNTKHIRKEDVSPLSKTSFPMCMRVMYDSLVETSSLKYEGRLQFGTFLKGIGLPYDEAINFWRIAFSKRVSNTDFDKEYLYNIRHNYGLEGKSTNYSPYSCPRIISKSPHNGDKLVHGCPYIQSLERLEQKLLDLGIDDFQRIQILEATKTSPNVACTKHFNFLHPNNTLTKLINHPNQFYDQSMEYYKTLEEKKSAKQSNNKENENQSIDEK</sequence>
<name>PRI2_DICDI</name>
<comment type="function">
    <text evidence="1">DNA primase is the polymerase that synthesizes small RNA primers for the Okazaki fragments made during discontinuous DNA replication.</text>
</comment>
<comment type="cofactor">
    <cofactor evidence="1">
        <name>[4Fe-4S] cluster</name>
        <dbReference type="ChEBI" id="CHEBI:49883"/>
    </cofactor>
    <text evidence="1">Binds 1 [4Fe-4S] cluster.</text>
</comment>
<comment type="subunit">
    <text evidence="1">Heterodimer of a small subunit and a large subunit.</text>
</comment>
<comment type="similarity">
    <text evidence="3">Belongs to the eukaryotic-type primase large subunit family.</text>
</comment>
<reference key="1">
    <citation type="journal article" date="2005" name="Nature">
        <title>The genome of the social amoeba Dictyostelium discoideum.</title>
        <authorList>
            <person name="Eichinger L."/>
            <person name="Pachebat J.A."/>
            <person name="Gloeckner G."/>
            <person name="Rajandream M.A."/>
            <person name="Sucgang R."/>
            <person name="Berriman M."/>
            <person name="Song J."/>
            <person name="Olsen R."/>
            <person name="Szafranski K."/>
            <person name="Xu Q."/>
            <person name="Tunggal B."/>
            <person name="Kummerfeld S."/>
            <person name="Madera M."/>
            <person name="Konfortov B.A."/>
            <person name="Rivero F."/>
            <person name="Bankier A.T."/>
            <person name="Lehmann R."/>
            <person name="Hamlin N."/>
            <person name="Davies R."/>
            <person name="Gaudet P."/>
            <person name="Fey P."/>
            <person name="Pilcher K."/>
            <person name="Chen G."/>
            <person name="Saunders D."/>
            <person name="Sodergren E.J."/>
            <person name="Davis P."/>
            <person name="Kerhornou A."/>
            <person name="Nie X."/>
            <person name="Hall N."/>
            <person name="Anjard C."/>
            <person name="Hemphill L."/>
            <person name="Bason N."/>
            <person name="Farbrother P."/>
            <person name="Desany B."/>
            <person name="Just E."/>
            <person name="Morio T."/>
            <person name="Rost R."/>
            <person name="Churcher C.M."/>
            <person name="Cooper J."/>
            <person name="Haydock S."/>
            <person name="van Driessche N."/>
            <person name="Cronin A."/>
            <person name="Goodhead I."/>
            <person name="Muzny D.M."/>
            <person name="Mourier T."/>
            <person name="Pain A."/>
            <person name="Lu M."/>
            <person name="Harper D."/>
            <person name="Lindsay R."/>
            <person name="Hauser H."/>
            <person name="James K.D."/>
            <person name="Quiles M."/>
            <person name="Madan Babu M."/>
            <person name="Saito T."/>
            <person name="Buchrieser C."/>
            <person name="Wardroper A."/>
            <person name="Felder M."/>
            <person name="Thangavelu M."/>
            <person name="Johnson D."/>
            <person name="Knights A."/>
            <person name="Loulseged H."/>
            <person name="Mungall K.L."/>
            <person name="Oliver K."/>
            <person name="Price C."/>
            <person name="Quail M.A."/>
            <person name="Urushihara H."/>
            <person name="Hernandez J."/>
            <person name="Rabbinowitsch E."/>
            <person name="Steffen D."/>
            <person name="Sanders M."/>
            <person name="Ma J."/>
            <person name="Kohara Y."/>
            <person name="Sharp S."/>
            <person name="Simmonds M.N."/>
            <person name="Spiegler S."/>
            <person name="Tivey A."/>
            <person name="Sugano S."/>
            <person name="White B."/>
            <person name="Walker D."/>
            <person name="Woodward J.R."/>
            <person name="Winckler T."/>
            <person name="Tanaka Y."/>
            <person name="Shaulsky G."/>
            <person name="Schleicher M."/>
            <person name="Weinstock G.M."/>
            <person name="Rosenthal A."/>
            <person name="Cox E.C."/>
            <person name="Chisholm R.L."/>
            <person name="Gibbs R.A."/>
            <person name="Loomis W.F."/>
            <person name="Platzer M."/>
            <person name="Kay R.R."/>
            <person name="Williams J.G."/>
            <person name="Dear P.H."/>
            <person name="Noegel A.A."/>
            <person name="Barrell B.G."/>
            <person name="Kuspa A."/>
        </authorList>
    </citation>
    <scope>NUCLEOTIDE SEQUENCE [LARGE SCALE GENOMIC DNA]</scope>
    <source>
        <strain>AX4</strain>
    </source>
</reference>
<gene>
    <name type="primary">prim2</name>
    <name type="synonym">polA3</name>
    <name type="ORF">DDB_G0270442</name>
</gene>
<accession>Q55BM5</accession>
<organism>
    <name type="scientific">Dictyostelium discoideum</name>
    <name type="common">Social amoeba</name>
    <dbReference type="NCBI Taxonomy" id="44689"/>
    <lineage>
        <taxon>Eukaryota</taxon>
        <taxon>Amoebozoa</taxon>
        <taxon>Evosea</taxon>
        <taxon>Eumycetozoa</taxon>
        <taxon>Dictyostelia</taxon>
        <taxon>Dictyosteliales</taxon>
        <taxon>Dictyosteliaceae</taxon>
        <taxon>Dictyostelium</taxon>
    </lineage>
</organism>
<keyword id="KW-0004">4Fe-4S</keyword>
<keyword id="KW-0235">DNA replication</keyword>
<keyword id="KW-0238">DNA-binding</keyword>
<keyword id="KW-0408">Iron</keyword>
<keyword id="KW-0411">Iron-sulfur</keyword>
<keyword id="KW-0479">Metal-binding</keyword>
<keyword id="KW-0639">Primosome</keyword>
<keyword id="KW-1185">Reference proteome</keyword>
<dbReference type="EMBL" id="AAFI02000005">
    <property type="protein sequence ID" value="EAL72571.1"/>
    <property type="molecule type" value="Genomic_DNA"/>
</dbReference>
<dbReference type="RefSeq" id="XP_646806.1">
    <property type="nucleotide sequence ID" value="XM_641714.1"/>
</dbReference>
<dbReference type="SMR" id="Q55BM5"/>
<dbReference type="FunCoup" id="Q55BM5">
    <property type="interactions" value="648"/>
</dbReference>
<dbReference type="STRING" id="44689.Q55BM5"/>
<dbReference type="PaxDb" id="44689-DDB0232281"/>
<dbReference type="EnsemblProtists" id="EAL72571">
    <property type="protein sequence ID" value="EAL72571"/>
    <property type="gene ID" value="DDB_G0270442"/>
</dbReference>
<dbReference type="GeneID" id="8617779"/>
<dbReference type="KEGG" id="ddi:DDB_G0270442"/>
<dbReference type="dictyBase" id="DDB_G0270442">
    <property type="gene designation" value="polA3"/>
</dbReference>
<dbReference type="VEuPathDB" id="AmoebaDB:DDB_G0270442"/>
<dbReference type="eggNOG" id="KOG2267">
    <property type="taxonomic scope" value="Eukaryota"/>
</dbReference>
<dbReference type="HOGENOM" id="CLU_026253_2_0_1"/>
<dbReference type="InParanoid" id="Q55BM5"/>
<dbReference type="OMA" id="RINYKPW"/>
<dbReference type="PhylomeDB" id="Q55BM5"/>
<dbReference type="Reactome" id="R-DDI-113501">
    <property type="pathway name" value="Inhibition of replication initiation of damaged DNA by RB1/E2F1"/>
</dbReference>
<dbReference type="Reactome" id="R-DDI-68952">
    <property type="pathway name" value="DNA replication initiation"/>
</dbReference>
<dbReference type="Reactome" id="R-DDI-68962">
    <property type="pathway name" value="Activation of the pre-replicative complex"/>
</dbReference>
<dbReference type="Reactome" id="R-DDI-69091">
    <property type="pathway name" value="Polymerase switching"/>
</dbReference>
<dbReference type="Reactome" id="R-DDI-69166">
    <property type="pathway name" value="Removal of the Flap Intermediate"/>
</dbReference>
<dbReference type="Reactome" id="R-DDI-69183">
    <property type="pathway name" value="Processive synthesis on the lagging strand"/>
</dbReference>
<dbReference type="PRO" id="PR:Q55BM5"/>
<dbReference type="Proteomes" id="UP000002195">
    <property type="component" value="Chromosome 1"/>
</dbReference>
<dbReference type="GO" id="GO:0005658">
    <property type="term" value="C:alpha DNA polymerase:primase complex"/>
    <property type="evidence" value="ECO:0000250"/>
    <property type="project" value="dictyBase"/>
</dbReference>
<dbReference type="GO" id="GO:0051539">
    <property type="term" value="F:4 iron, 4 sulfur cluster binding"/>
    <property type="evidence" value="ECO:0007669"/>
    <property type="project" value="UniProtKB-KW"/>
</dbReference>
<dbReference type="GO" id="GO:0003677">
    <property type="term" value="F:DNA binding"/>
    <property type="evidence" value="ECO:0007669"/>
    <property type="project" value="UniProtKB-KW"/>
</dbReference>
<dbReference type="GO" id="GO:0046872">
    <property type="term" value="F:metal ion binding"/>
    <property type="evidence" value="ECO:0007669"/>
    <property type="project" value="UniProtKB-KW"/>
</dbReference>
<dbReference type="GO" id="GO:0006270">
    <property type="term" value="P:DNA replication initiation"/>
    <property type="evidence" value="ECO:0000318"/>
    <property type="project" value="GO_Central"/>
</dbReference>
<dbReference type="GO" id="GO:0006269">
    <property type="term" value="P:DNA replication, synthesis of primer"/>
    <property type="evidence" value="ECO:0000250"/>
    <property type="project" value="dictyBase"/>
</dbReference>
<dbReference type="CDD" id="cd07322">
    <property type="entry name" value="PriL_PriS_Eukaryotic"/>
    <property type="match status" value="1"/>
</dbReference>
<dbReference type="FunFam" id="1.20.930.80:FF:000009">
    <property type="entry name" value="DNA primase large subunit"/>
    <property type="match status" value="1"/>
</dbReference>
<dbReference type="Gene3D" id="1.20.930.80">
    <property type="match status" value="1"/>
</dbReference>
<dbReference type="InterPro" id="IPR016558">
    <property type="entry name" value="DNA_primase_lsu_euk"/>
</dbReference>
<dbReference type="InterPro" id="IPR007238">
    <property type="entry name" value="DNA_primase_lsu_euk/arc"/>
</dbReference>
<dbReference type="PANTHER" id="PTHR10537">
    <property type="entry name" value="DNA PRIMASE LARGE SUBUNIT"/>
    <property type="match status" value="1"/>
</dbReference>
<dbReference type="PANTHER" id="PTHR10537:SF3">
    <property type="entry name" value="DNA PRIMASE LARGE SUBUNIT"/>
    <property type="match status" value="1"/>
</dbReference>
<dbReference type="Pfam" id="PF04104">
    <property type="entry name" value="DNA_primase_lrg"/>
    <property type="match status" value="1"/>
</dbReference>
<dbReference type="PIRSF" id="PIRSF009449">
    <property type="entry name" value="DNA_primase_large_subunit"/>
    <property type="match status" value="1"/>
</dbReference>
<feature type="chain" id="PRO_0000328102" description="DNA primase large subunit">
    <location>
        <begin position="1"/>
        <end position="470"/>
    </location>
</feature>
<feature type="region of interest" description="Disordered" evidence="2">
    <location>
        <begin position="449"/>
        <end position="470"/>
    </location>
</feature>
<feature type="binding site" evidence="1">
    <location>
        <position position="279"/>
    </location>
    <ligand>
        <name>[4Fe-4S] cluster</name>
        <dbReference type="ChEBI" id="CHEBI:49883"/>
    </ligand>
</feature>
<feature type="binding site" evidence="1">
    <location>
        <position position="358"/>
    </location>
    <ligand>
        <name>[4Fe-4S] cluster</name>
        <dbReference type="ChEBI" id="CHEBI:49883"/>
    </ligand>
</feature>
<feature type="binding site" evidence="1">
    <location>
        <position position="376"/>
    </location>
    <ligand>
        <name>[4Fe-4S] cluster</name>
        <dbReference type="ChEBI" id="CHEBI:49883"/>
    </ligand>
</feature>
<feature type="binding site" evidence="1">
    <location>
        <position position="414"/>
    </location>
    <ligand>
        <name>[4Fe-4S] cluster</name>
        <dbReference type="ChEBI" id="CHEBI:49883"/>
    </ligand>
</feature>
<protein>
    <recommendedName>
        <fullName>DNA primase large subunit</fullName>
    </recommendedName>
</protein>